<dbReference type="EMBL" id="Z22517">
    <property type="protein sequence ID" value="CAA80244.1"/>
    <property type="molecule type" value="Genomic_DNA"/>
</dbReference>
<dbReference type="EMBL" id="Z46607">
    <property type="protein sequence ID" value="CAA86575.1"/>
    <property type="molecule type" value="Genomic_DNA"/>
</dbReference>
<dbReference type="EMBL" id="BA000040">
    <property type="protein sequence ID" value="BAC48392.1"/>
    <property type="molecule type" value="Genomic_DNA"/>
</dbReference>
<dbReference type="PIR" id="S54746">
    <property type="entry name" value="S54746"/>
</dbReference>
<dbReference type="RefSeq" id="NP_769767.1">
    <property type="nucleotide sequence ID" value="NC_004463.1"/>
</dbReference>
<dbReference type="RefSeq" id="WP_011085911.1">
    <property type="nucleotide sequence ID" value="NC_004463.1"/>
</dbReference>
<dbReference type="SMR" id="P45403"/>
<dbReference type="FunCoup" id="P45403">
    <property type="interactions" value="119"/>
</dbReference>
<dbReference type="STRING" id="224911.AAV28_12660"/>
<dbReference type="TCDB" id="9.B.14.1.2">
    <property type="family name" value="the putative heme handling protein (hhp) family"/>
</dbReference>
<dbReference type="EnsemblBacteria" id="BAC48392">
    <property type="protein sequence ID" value="BAC48392"/>
    <property type="gene ID" value="BAC48392"/>
</dbReference>
<dbReference type="GeneID" id="46490165"/>
<dbReference type="KEGG" id="bja:blr3127"/>
<dbReference type="PATRIC" id="fig|224911.44.peg.2760"/>
<dbReference type="eggNOG" id="COG1138">
    <property type="taxonomic scope" value="Bacteria"/>
</dbReference>
<dbReference type="HOGENOM" id="CLU_015041_3_0_5"/>
<dbReference type="InParanoid" id="P45403"/>
<dbReference type="OrthoDB" id="9761451at2"/>
<dbReference type="PhylomeDB" id="P45403"/>
<dbReference type="Proteomes" id="UP000002526">
    <property type="component" value="Chromosome"/>
</dbReference>
<dbReference type="GO" id="GO:0005886">
    <property type="term" value="C:plasma membrane"/>
    <property type="evidence" value="ECO:0007669"/>
    <property type="project" value="UniProtKB-SubCell"/>
</dbReference>
<dbReference type="GO" id="GO:0020037">
    <property type="term" value="F:heme binding"/>
    <property type="evidence" value="ECO:0007669"/>
    <property type="project" value="InterPro"/>
</dbReference>
<dbReference type="GO" id="GO:0015232">
    <property type="term" value="F:heme transmembrane transporter activity"/>
    <property type="evidence" value="ECO:0007669"/>
    <property type="project" value="InterPro"/>
</dbReference>
<dbReference type="GO" id="GO:0017004">
    <property type="term" value="P:cytochrome complex assembly"/>
    <property type="evidence" value="ECO:0007669"/>
    <property type="project" value="UniProtKB-KW"/>
</dbReference>
<dbReference type="InterPro" id="IPR032523">
    <property type="entry name" value="CcmF_C"/>
</dbReference>
<dbReference type="InterPro" id="IPR002541">
    <property type="entry name" value="Cyt_c_assembly"/>
</dbReference>
<dbReference type="InterPro" id="IPR003567">
    <property type="entry name" value="Cyt_c_biogenesis"/>
</dbReference>
<dbReference type="InterPro" id="IPR003568">
    <property type="entry name" value="Cyt_c_biogenesis_CcmF"/>
</dbReference>
<dbReference type="NCBIfam" id="TIGR00353">
    <property type="entry name" value="nrfE"/>
    <property type="match status" value="1"/>
</dbReference>
<dbReference type="NCBIfam" id="NF007691">
    <property type="entry name" value="PRK10369.1"/>
    <property type="match status" value="1"/>
</dbReference>
<dbReference type="PANTHER" id="PTHR43653">
    <property type="entry name" value="CYTOCHROME C ASSEMBLY PROTEIN-RELATED"/>
    <property type="match status" value="1"/>
</dbReference>
<dbReference type="PANTHER" id="PTHR43653:SF1">
    <property type="entry name" value="CYTOCHROME C-TYPE BIOGENESIS PROTEIN CCMF"/>
    <property type="match status" value="1"/>
</dbReference>
<dbReference type="Pfam" id="PF16327">
    <property type="entry name" value="CcmF_C"/>
    <property type="match status" value="1"/>
</dbReference>
<dbReference type="Pfam" id="PF01578">
    <property type="entry name" value="Cytochrom_C_asm"/>
    <property type="match status" value="1"/>
</dbReference>
<dbReference type="PRINTS" id="PR01410">
    <property type="entry name" value="CCBIOGENESIS"/>
</dbReference>
<dbReference type="PRINTS" id="PR01411">
    <property type="entry name" value="CCMFBIOGNSIS"/>
</dbReference>
<feature type="chain" id="PRO_0000201585" description="Cytochrome c-type biogenesis protein CycK">
    <location>
        <begin position="1"/>
        <end position="660"/>
    </location>
</feature>
<feature type="transmembrane region" description="Helical" evidence="1">
    <location>
        <begin position="8"/>
        <end position="28"/>
    </location>
</feature>
<feature type="transmembrane region" description="Helical" evidence="1">
    <location>
        <begin position="42"/>
        <end position="62"/>
    </location>
</feature>
<feature type="transmembrane region" description="Helical" evidence="1">
    <location>
        <begin position="94"/>
        <end position="114"/>
    </location>
</feature>
<feature type="transmembrane region" description="Helical" evidence="1">
    <location>
        <begin position="123"/>
        <end position="143"/>
    </location>
</feature>
<feature type="transmembrane region" description="Helical" evidence="1">
    <location>
        <begin position="175"/>
        <end position="195"/>
    </location>
</feature>
<feature type="transmembrane region" description="Helical" evidence="1">
    <location>
        <begin position="210"/>
        <end position="230"/>
    </location>
</feature>
<feature type="transmembrane region" description="Helical" evidence="1">
    <location>
        <begin position="233"/>
        <end position="253"/>
    </location>
</feature>
<feature type="transmembrane region" description="Helical" evidence="1">
    <location>
        <begin position="273"/>
        <end position="293"/>
    </location>
</feature>
<feature type="transmembrane region" description="Helical" evidence="1">
    <location>
        <begin position="311"/>
        <end position="331"/>
    </location>
</feature>
<feature type="transmembrane region" description="Helical" evidence="1">
    <location>
        <begin position="350"/>
        <end position="370"/>
    </location>
</feature>
<feature type="transmembrane region" description="Helical" evidence="1">
    <location>
        <begin position="392"/>
        <end position="412"/>
    </location>
</feature>
<feature type="transmembrane region" description="Helical" evidence="1">
    <location>
        <begin position="419"/>
        <end position="439"/>
    </location>
</feature>
<feature type="transmembrane region" description="Helical" evidence="1">
    <location>
        <begin position="445"/>
        <end position="465"/>
    </location>
</feature>
<feature type="transmembrane region" description="Helical" evidence="1">
    <location>
        <begin position="492"/>
        <end position="512"/>
    </location>
</feature>
<feature type="transmembrane region" description="Helical" evidence="1">
    <location>
        <begin position="617"/>
        <end position="637"/>
    </location>
</feature>
<feature type="sequence conflict" description="In Ref. 1; CAA80244/CAA86575." evidence="2" ref="1">
    <original>R</original>
    <variation>L</variation>
    <location>
        <position position="205"/>
    </location>
</feature>
<sequence>MIAESGHYALVLALGLALIQSIVPLIGARLRDDALMSVARSTALAQLLFVGASFVALVMLHVNSDFSVANVYENSHSMKPLLYKITGVWGNHEGSMLLWVSILALFGGLVAAFGNNLPLSLRAHVLAVQAWIASAFYLFILVTSNPFLRIANPPIEGRDLNPVLQDIGLAVHPPMLYLGYVGFSISFSFAIAALMEGRIDAAWARWVRPWTLVAWIFLTLGIAMGSYWAYYELGWGGWWFWDPVENASLMPWLAGTALLHSALVMEKRNALKVWTILLSILTFSLSLLGTFLVRSGVITSVHAFATDPTRGVFILLILCLFIGGSLSLFAGRATSLKQGGLFAPISREGALVLNNLLLTVACAVVLFGTLYPLAMEMLADFKMSVGAPFYNLTFAPLFALLLLAVPFGPMLAWKRGDLLGVTQRLLAAGVAGLVVVAIVWAWTRGGSALAPLAIGLGVFVIAGAVTDLVERTGLVRLPLATALQRARGLPRSAWGAALAHAGLGVALIGIVCETTWNSEYIATMKRSDVAHVAGYDVKLDGLFQRQGPNYREMIAEFNVSRDGETLSVMTPSKRSFTTRGSSTTEAALLTRGASQLYISLGDANAEGAIAVRIYHKPLVLLIWWGPVLMAFGGVLSLSDRRLRVGAPKPARAKQRLQPAE</sequence>
<organism>
    <name type="scientific">Bradyrhizobium diazoefficiens (strain JCM 10833 / BCRC 13528 / IAM 13628 / NBRC 14792 / USDA 110)</name>
    <dbReference type="NCBI Taxonomy" id="224911"/>
    <lineage>
        <taxon>Bacteria</taxon>
        <taxon>Pseudomonadati</taxon>
        <taxon>Pseudomonadota</taxon>
        <taxon>Alphaproteobacteria</taxon>
        <taxon>Hyphomicrobiales</taxon>
        <taxon>Nitrobacteraceae</taxon>
        <taxon>Bradyrhizobium</taxon>
    </lineage>
</organism>
<evidence type="ECO:0000255" key="1"/>
<evidence type="ECO:0000305" key="2"/>
<name>CCMF_BRADU</name>
<reference key="1">
    <citation type="journal article" date="1995" name="Mol. Gen. Genet.">
        <title>The cycHJKL gene cluster plays an essential role in the biogenesis of c-type cytochromes in Bradyrhizobium japonicum.</title>
        <authorList>
            <person name="Ritz D."/>
            <person name="Thoeny-Meyer L."/>
            <person name="Hennecke H."/>
        </authorList>
    </citation>
    <scope>NUCLEOTIDE SEQUENCE [GENOMIC DNA]</scope>
    <source>
        <strain>USDA 110spc4</strain>
    </source>
</reference>
<reference key="2">
    <citation type="journal article" date="2002" name="DNA Res.">
        <title>Complete genomic sequence of nitrogen-fixing symbiotic bacterium Bradyrhizobium japonicum USDA110.</title>
        <authorList>
            <person name="Kaneko T."/>
            <person name="Nakamura Y."/>
            <person name="Sato S."/>
            <person name="Minamisawa K."/>
            <person name="Uchiumi T."/>
            <person name="Sasamoto S."/>
            <person name="Watanabe A."/>
            <person name="Idesawa K."/>
            <person name="Iriguchi M."/>
            <person name="Kawashima K."/>
            <person name="Kohara M."/>
            <person name="Matsumoto M."/>
            <person name="Shimpo S."/>
            <person name="Tsuruoka H."/>
            <person name="Wada T."/>
            <person name="Yamada M."/>
            <person name="Tabata S."/>
        </authorList>
    </citation>
    <scope>NUCLEOTIDE SEQUENCE [LARGE SCALE GENOMIC DNA]</scope>
    <source>
        <strain>JCM 10833 / BCRC 13528 / IAM 13628 / NBRC 14792 / USDA 110</strain>
    </source>
</reference>
<comment type="function">
    <text>Required for the biogenesis of c-type cytochromes. Possible subunit of a heme lyase.</text>
</comment>
<comment type="subcellular location">
    <subcellularLocation>
        <location evidence="2">Cell inner membrane</location>
        <topology evidence="2">Multi-pass membrane protein</topology>
    </subcellularLocation>
</comment>
<comment type="similarity">
    <text evidence="2">Belongs to the CcmF/CycK/Ccl1/NrfE/CcsA family.</text>
</comment>
<protein>
    <recommendedName>
        <fullName>Cytochrome c-type biogenesis protein CycK</fullName>
    </recommendedName>
</protein>
<gene>
    <name type="primary">cycK</name>
    <name type="ordered locus">blr3127</name>
</gene>
<accession>P45403</accession>
<keyword id="KW-0997">Cell inner membrane</keyword>
<keyword id="KW-1003">Cell membrane</keyword>
<keyword id="KW-0201">Cytochrome c-type biogenesis</keyword>
<keyword id="KW-0472">Membrane</keyword>
<keyword id="KW-1185">Reference proteome</keyword>
<keyword id="KW-0812">Transmembrane</keyword>
<keyword id="KW-1133">Transmembrane helix</keyword>
<proteinExistence type="inferred from homology"/>